<dbReference type="EC" id="3.1.11.6" evidence="1"/>
<dbReference type="EMBL" id="CP001176">
    <property type="protein sequence ID" value="ACK58910.1"/>
    <property type="molecule type" value="Genomic_DNA"/>
</dbReference>
<dbReference type="RefSeq" id="WP_000428423.1">
    <property type="nucleotide sequence ID" value="NZ_VEHB01000002.1"/>
</dbReference>
<dbReference type="SMR" id="B7HB50"/>
<dbReference type="GeneID" id="93006923"/>
<dbReference type="KEGG" id="bcb:BCB4264_A4289"/>
<dbReference type="HOGENOM" id="CLU_145918_3_1_9"/>
<dbReference type="Proteomes" id="UP000007096">
    <property type="component" value="Chromosome"/>
</dbReference>
<dbReference type="GO" id="GO:0005829">
    <property type="term" value="C:cytosol"/>
    <property type="evidence" value="ECO:0007669"/>
    <property type="project" value="TreeGrafter"/>
</dbReference>
<dbReference type="GO" id="GO:0009318">
    <property type="term" value="C:exodeoxyribonuclease VII complex"/>
    <property type="evidence" value="ECO:0007669"/>
    <property type="project" value="InterPro"/>
</dbReference>
<dbReference type="GO" id="GO:0008855">
    <property type="term" value="F:exodeoxyribonuclease VII activity"/>
    <property type="evidence" value="ECO:0007669"/>
    <property type="project" value="UniProtKB-UniRule"/>
</dbReference>
<dbReference type="GO" id="GO:0006308">
    <property type="term" value="P:DNA catabolic process"/>
    <property type="evidence" value="ECO:0007669"/>
    <property type="project" value="UniProtKB-UniRule"/>
</dbReference>
<dbReference type="FunFam" id="1.10.287.1040:FF:000002">
    <property type="entry name" value="Exodeoxyribonuclease 7 small subunit"/>
    <property type="match status" value="1"/>
</dbReference>
<dbReference type="Gene3D" id="1.10.287.1040">
    <property type="entry name" value="Exonuclease VII, small subunit"/>
    <property type="match status" value="1"/>
</dbReference>
<dbReference type="HAMAP" id="MF_00337">
    <property type="entry name" value="Exonuc_7_S"/>
    <property type="match status" value="1"/>
</dbReference>
<dbReference type="InterPro" id="IPR003761">
    <property type="entry name" value="Exonuc_VII_S"/>
</dbReference>
<dbReference type="InterPro" id="IPR037004">
    <property type="entry name" value="Exonuc_VII_ssu_sf"/>
</dbReference>
<dbReference type="NCBIfam" id="NF010666">
    <property type="entry name" value="PRK14063.1"/>
    <property type="match status" value="1"/>
</dbReference>
<dbReference type="NCBIfam" id="TIGR01280">
    <property type="entry name" value="xseB"/>
    <property type="match status" value="1"/>
</dbReference>
<dbReference type="PANTHER" id="PTHR34137">
    <property type="entry name" value="EXODEOXYRIBONUCLEASE 7 SMALL SUBUNIT"/>
    <property type="match status" value="1"/>
</dbReference>
<dbReference type="PANTHER" id="PTHR34137:SF1">
    <property type="entry name" value="EXODEOXYRIBONUCLEASE 7 SMALL SUBUNIT"/>
    <property type="match status" value="1"/>
</dbReference>
<dbReference type="Pfam" id="PF02609">
    <property type="entry name" value="Exonuc_VII_S"/>
    <property type="match status" value="1"/>
</dbReference>
<dbReference type="PIRSF" id="PIRSF006488">
    <property type="entry name" value="Exonuc_VII_S"/>
    <property type="match status" value="1"/>
</dbReference>
<dbReference type="SUPFAM" id="SSF116842">
    <property type="entry name" value="XseB-like"/>
    <property type="match status" value="1"/>
</dbReference>
<comment type="function">
    <text evidence="1">Bidirectionally degrades single-stranded DNA into large acid-insoluble oligonucleotides, which are then degraded further into small acid-soluble oligonucleotides.</text>
</comment>
<comment type="catalytic activity">
    <reaction evidence="1">
        <text>Exonucleolytic cleavage in either 5'- to 3'- or 3'- to 5'-direction to yield nucleoside 5'-phosphates.</text>
        <dbReference type="EC" id="3.1.11.6"/>
    </reaction>
</comment>
<comment type="subunit">
    <text evidence="1">Heterooligomer composed of large and small subunits.</text>
</comment>
<comment type="subcellular location">
    <subcellularLocation>
        <location evidence="1">Cytoplasm</location>
    </subcellularLocation>
</comment>
<comment type="similarity">
    <text evidence="1">Belongs to the XseB family.</text>
</comment>
<proteinExistence type="inferred from homology"/>
<reference key="1">
    <citation type="submission" date="2008-10" db="EMBL/GenBank/DDBJ databases">
        <title>Genome sequence of Bacillus cereus B4264.</title>
        <authorList>
            <person name="Dodson R.J."/>
            <person name="Durkin A.S."/>
            <person name="Rosovitz M.J."/>
            <person name="Rasko D.A."/>
            <person name="Hoffmaster A."/>
            <person name="Ravel J."/>
            <person name="Sutton G."/>
        </authorList>
    </citation>
    <scope>NUCLEOTIDE SEQUENCE [LARGE SCALE GENOMIC DNA]</scope>
    <source>
        <strain>B4264</strain>
    </source>
</reference>
<protein>
    <recommendedName>
        <fullName evidence="1">Exodeoxyribonuclease 7 small subunit</fullName>
        <ecNumber evidence="1">3.1.11.6</ecNumber>
    </recommendedName>
    <alternativeName>
        <fullName evidence="1">Exodeoxyribonuclease VII small subunit</fullName>
        <shortName evidence="1">Exonuclease VII small subunit</shortName>
    </alternativeName>
</protein>
<sequence length="76" mass="8516">MENKLSFEEAISQLEHLVSKLEQGDVPLEEAISYFKEGMELSKLCDEKLKNVQEQMAVILGEDGELEPFTALGDEA</sequence>
<gene>
    <name evidence="1" type="primary">xseB</name>
    <name type="ordered locus">BCB4264_A4289</name>
</gene>
<keyword id="KW-0963">Cytoplasm</keyword>
<keyword id="KW-0269">Exonuclease</keyword>
<keyword id="KW-0378">Hydrolase</keyword>
<keyword id="KW-0540">Nuclease</keyword>
<evidence type="ECO:0000255" key="1">
    <source>
        <dbReference type="HAMAP-Rule" id="MF_00337"/>
    </source>
</evidence>
<organism>
    <name type="scientific">Bacillus cereus (strain B4264)</name>
    <dbReference type="NCBI Taxonomy" id="405532"/>
    <lineage>
        <taxon>Bacteria</taxon>
        <taxon>Bacillati</taxon>
        <taxon>Bacillota</taxon>
        <taxon>Bacilli</taxon>
        <taxon>Bacillales</taxon>
        <taxon>Bacillaceae</taxon>
        <taxon>Bacillus</taxon>
        <taxon>Bacillus cereus group</taxon>
    </lineage>
</organism>
<accession>B7HB50</accession>
<feature type="chain" id="PRO_1000119899" description="Exodeoxyribonuclease 7 small subunit">
    <location>
        <begin position="1"/>
        <end position="76"/>
    </location>
</feature>
<name>EX7S_BACC4</name>